<keyword id="KW-0001">2Fe-2S</keyword>
<keyword id="KW-0963">Cytoplasm</keyword>
<keyword id="KW-0408">Iron</keyword>
<keyword id="KW-0411">Iron-sulfur</keyword>
<keyword id="KW-0479">Metal-binding</keyword>
<keyword id="KW-0663">Pyridoxal phosphate</keyword>
<keyword id="KW-1185">Reference proteome</keyword>
<keyword id="KW-0808">Transferase</keyword>
<dbReference type="EC" id="2.8.1.7" evidence="1"/>
<dbReference type="EMBL" id="CP000563">
    <property type="protein sequence ID" value="ABN61890.1"/>
    <property type="molecule type" value="Genomic_DNA"/>
</dbReference>
<dbReference type="RefSeq" id="WP_011846947.1">
    <property type="nucleotide sequence ID" value="NC_009052.1"/>
</dbReference>
<dbReference type="SMR" id="A3D577"/>
<dbReference type="STRING" id="325240.Sbal_2397"/>
<dbReference type="KEGG" id="sbl:Sbal_2397"/>
<dbReference type="HOGENOM" id="CLU_003433_0_2_6"/>
<dbReference type="OrthoDB" id="9808002at2"/>
<dbReference type="UniPathway" id="UPA00266"/>
<dbReference type="Proteomes" id="UP000001557">
    <property type="component" value="Chromosome"/>
</dbReference>
<dbReference type="GO" id="GO:1990221">
    <property type="term" value="C:L-cysteine desulfurase complex"/>
    <property type="evidence" value="ECO:0007669"/>
    <property type="project" value="UniProtKB-ARBA"/>
</dbReference>
<dbReference type="GO" id="GO:0051537">
    <property type="term" value="F:2 iron, 2 sulfur cluster binding"/>
    <property type="evidence" value="ECO:0007669"/>
    <property type="project" value="UniProtKB-UniRule"/>
</dbReference>
<dbReference type="GO" id="GO:0031071">
    <property type="term" value="F:cysteine desulfurase activity"/>
    <property type="evidence" value="ECO:0007669"/>
    <property type="project" value="UniProtKB-UniRule"/>
</dbReference>
<dbReference type="GO" id="GO:0046872">
    <property type="term" value="F:metal ion binding"/>
    <property type="evidence" value="ECO:0007669"/>
    <property type="project" value="UniProtKB-KW"/>
</dbReference>
<dbReference type="GO" id="GO:0030170">
    <property type="term" value="F:pyridoxal phosphate binding"/>
    <property type="evidence" value="ECO:0007669"/>
    <property type="project" value="UniProtKB-UniRule"/>
</dbReference>
<dbReference type="GO" id="GO:0044571">
    <property type="term" value="P:[2Fe-2S] cluster assembly"/>
    <property type="evidence" value="ECO:0007669"/>
    <property type="project" value="UniProtKB-UniRule"/>
</dbReference>
<dbReference type="FunFam" id="3.40.640.10:FF:000003">
    <property type="entry name" value="Cysteine desulfurase IscS"/>
    <property type="match status" value="1"/>
</dbReference>
<dbReference type="FunFam" id="3.90.1150.10:FF:000002">
    <property type="entry name" value="Cysteine desulfurase IscS"/>
    <property type="match status" value="1"/>
</dbReference>
<dbReference type="Gene3D" id="3.90.1150.10">
    <property type="entry name" value="Aspartate Aminotransferase, domain 1"/>
    <property type="match status" value="1"/>
</dbReference>
<dbReference type="Gene3D" id="3.40.640.10">
    <property type="entry name" value="Type I PLP-dependent aspartate aminotransferase-like (Major domain)"/>
    <property type="match status" value="1"/>
</dbReference>
<dbReference type="HAMAP" id="MF_00331">
    <property type="entry name" value="Cys_desulf_IscS"/>
    <property type="match status" value="1"/>
</dbReference>
<dbReference type="InterPro" id="IPR000192">
    <property type="entry name" value="Aminotrans_V_dom"/>
</dbReference>
<dbReference type="InterPro" id="IPR020578">
    <property type="entry name" value="Aminotrans_V_PyrdxlP_BS"/>
</dbReference>
<dbReference type="InterPro" id="IPR010240">
    <property type="entry name" value="Cys_deSase_IscS"/>
</dbReference>
<dbReference type="InterPro" id="IPR016454">
    <property type="entry name" value="Cysteine_dSase"/>
</dbReference>
<dbReference type="InterPro" id="IPR015424">
    <property type="entry name" value="PyrdxlP-dep_Trfase"/>
</dbReference>
<dbReference type="InterPro" id="IPR015421">
    <property type="entry name" value="PyrdxlP-dep_Trfase_major"/>
</dbReference>
<dbReference type="InterPro" id="IPR015422">
    <property type="entry name" value="PyrdxlP-dep_Trfase_small"/>
</dbReference>
<dbReference type="NCBIfam" id="TIGR02006">
    <property type="entry name" value="IscS"/>
    <property type="match status" value="1"/>
</dbReference>
<dbReference type="NCBIfam" id="NF002806">
    <property type="entry name" value="PRK02948.1"/>
    <property type="match status" value="1"/>
</dbReference>
<dbReference type="NCBIfam" id="NF010611">
    <property type="entry name" value="PRK14012.1"/>
    <property type="match status" value="1"/>
</dbReference>
<dbReference type="PANTHER" id="PTHR11601:SF34">
    <property type="entry name" value="CYSTEINE DESULFURASE"/>
    <property type="match status" value="1"/>
</dbReference>
<dbReference type="PANTHER" id="PTHR11601">
    <property type="entry name" value="CYSTEINE DESULFURYLASE FAMILY MEMBER"/>
    <property type="match status" value="1"/>
</dbReference>
<dbReference type="Pfam" id="PF00266">
    <property type="entry name" value="Aminotran_5"/>
    <property type="match status" value="1"/>
</dbReference>
<dbReference type="PIRSF" id="PIRSF005572">
    <property type="entry name" value="NifS"/>
    <property type="match status" value="1"/>
</dbReference>
<dbReference type="SUPFAM" id="SSF53383">
    <property type="entry name" value="PLP-dependent transferases"/>
    <property type="match status" value="1"/>
</dbReference>
<dbReference type="PROSITE" id="PS00595">
    <property type="entry name" value="AA_TRANSFER_CLASS_5"/>
    <property type="match status" value="1"/>
</dbReference>
<reference key="1">
    <citation type="submission" date="2007-02" db="EMBL/GenBank/DDBJ databases">
        <title>Complete sequence of chromosome of Shewanella baltica OS155.</title>
        <authorList>
            <consortium name="US DOE Joint Genome Institute"/>
            <person name="Copeland A."/>
            <person name="Lucas S."/>
            <person name="Lapidus A."/>
            <person name="Barry K."/>
            <person name="Detter J.C."/>
            <person name="Glavina del Rio T."/>
            <person name="Hammon N."/>
            <person name="Israni S."/>
            <person name="Dalin E."/>
            <person name="Tice H."/>
            <person name="Pitluck S."/>
            <person name="Sims D.R."/>
            <person name="Brettin T."/>
            <person name="Bruce D."/>
            <person name="Han C."/>
            <person name="Tapia R."/>
            <person name="Brainard J."/>
            <person name="Schmutz J."/>
            <person name="Larimer F."/>
            <person name="Land M."/>
            <person name="Hauser L."/>
            <person name="Kyrpides N."/>
            <person name="Mikhailova N."/>
            <person name="Brettar I."/>
            <person name="Klappenbach J."/>
            <person name="Konstantinidis K."/>
            <person name="Rodrigues J."/>
            <person name="Tiedje J."/>
            <person name="Richardson P."/>
        </authorList>
    </citation>
    <scope>NUCLEOTIDE SEQUENCE [LARGE SCALE GENOMIC DNA]</scope>
    <source>
        <strain>OS155 / ATCC BAA-1091</strain>
    </source>
</reference>
<gene>
    <name evidence="1" type="primary">iscS</name>
    <name type="ordered locus">Sbal_2397</name>
</gene>
<comment type="function">
    <text evidence="1">Master enzyme that delivers sulfur to a number of partners involved in Fe-S cluster assembly, tRNA modification or cofactor biosynthesis. Catalyzes the removal of elemental sulfur atoms from cysteine to produce alanine. Functions as a sulfur delivery protein for Fe-S cluster synthesis onto IscU, an Fe-S scaffold assembly protein, as well as other S acceptor proteins.</text>
</comment>
<comment type="catalytic activity">
    <reaction evidence="1">
        <text>(sulfur carrier)-H + L-cysteine = (sulfur carrier)-SH + L-alanine</text>
        <dbReference type="Rhea" id="RHEA:43892"/>
        <dbReference type="Rhea" id="RHEA-COMP:14737"/>
        <dbReference type="Rhea" id="RHEA-COMP:14739"/>
        <dbReference type="ChEBI" id="CHEBI:29917"/>
        <dbReference type="ChEBI" id="CHEBI:35235"/>
        <dbReference type="ChEBI" id="CHEBI:57972"/>
        <dbReference type="ChEBI" id="CHEBI:64428"/>
        <dbReference type="EC" id="2.8.1.7"/>
    </reaction>
</comment>
<comment type="cofactor">
    <cofactor evidence="1">
        <name>pyridoxal 5'-phosphate</name>
        <dbReference type="ChEBI" id="CHEBI:597326"/>
    </cofactor>
</comment>
<comment type="pathway">
    <text evidence="1">Cofactor biosynthesis; iron-sulfur cluster biosynthesis.</text>
</comment>
<comment type="subunit">
    <text evidence="1">Homodimer. Forms a heterotetramer with IscU, interacts with other sulfur acceptors.</text>
</comment>
<comment type="subcellular location">
    <subcellularLocation>
        <location evidence="1">Cytoplasm</location>
    </subcellularLocation>
</comment>
<comment type="similarity">
    <text evidence="1">Belongs to the class-V pyridoxal-phosphate-dependent aminotransferase family. NifS/IscS subfamily.</text>
</comment>
<proteinExistence type="inferred from homology"/>
<name>ISCS_SHEB5</name>
<organism>
    <name type="scientific">Shewanella baltica (strain OS155 / ATCC BAA-1091)</name>
    <dbReference type="NCBI Taxonomy" id="325240"/>
    <lineage>
        <taxon>Bacteria</taxon>
        <taxon>Pseudomonadati</taxon>
        <taxon>Pseudomonadota</taxon>
        <taxon>Gammaproteobacteria</taxon>
        <taxon>Alteromonadales</taxon>
        <taxon>Shewanellaceae</taxon>
        <taxon>Shewanella</taxon>
    </lineage>
</organism>
<accession>A3D577</accession>
<feature type="chain" id="PRO_1000019441" description="Cysteine desulfurase IscS">
    <location>
        <begin position="1"/>
        <end position="404"/>
    </location>
</feature>
<feature type="active site" description="Cysteine persulfide intermediate" evidence="1">
    <location>
        <position position="328"/>
    </location>
</feature>
<feature type="binding site" evidence="1">
    <location>
        <begin position="75"/>
        <end position="76"/>
    </location>
    <ligand>
        <name>pyridoxal 5'-phosphate</name>
        <dbReference type="ChEBI" id="CHEBI:597326"/>
    </ligand>
</feature>
<feature type="binding site" evidence="1">
    <location>
        <position position="155"/>
    </location>
    <ligand>
        <name>pyridoxal 5'-phosphate</name>
        <dbReference type="ChEBI" id="CHEBI:597326"/>
    </ligand>
</feature>
<feature type="binding site" evidence="1">
    <location>
        <position position="183"/>
    </location>
    <ligand>
        <name>pyridoxal 5'-phosphate</name>
        <dbReference type="ChEBI" id="CHEBI:597326"/>
    </ligand>
</feature>
<feature type="binding site" evidence="1">
    <location>
        <begin position="203"/>
        <end position="205"/>
    </location>
    <ligand>
        <name>pyridoxal 5'-phosphate</name>
        <dbReference type="ChEBI" id="CHEBI:597326"/>
    </ligand>
</feature>
<feature type="binding site" evidence="1">
    <location>
        <position position="243"/>
    </location>
    <ligand>
        <name>pyridoxal 5'-phosphate</name>
        <dbReference type="ChEBI" id="CHEBI:597326"/>
    </ligand>
</feature>
<feature type="binding site" description="via persulfide group" evidence="1">
    <location>
        <position position="328"/>
    </location>
    <ligand>
        <name>[2Fe-2S] cluster</name>
        <dbReference type="ChEBI" id="CHEBI:190135"/>
        <note>ligand shared with IscU</note>
    </ligand>
</feature>
<feature type="modified residue" description="N6-(pyridoxal phosphate)lysine" evidence="1">
    <location>
        <position position="206"/>
    </location>
</feature>
<sequence length="404" mass="44675">MKLPIYLDYAATTPVDPRVAEKMFQCMTMDGIFGNPASRSHRYGWQAEEAVDIARNQIAELINADHREIVFTSGATESNNLAIKGVAHFYHKKGKHIITSKTEHKAVLDTCRQLEREGFEVTYLEPAANGIIPMERLETAMRDDTILVSIMHVNNEIGVIHDIDAIGELCRSKGIIFHMDAAQSAGKVPIDVQATKVDLISISGHKMYGPKGIGALYVRRKPRIRLEAQMHGGGHERGMRSGTLPTHQIVGLGEAAAIAKAEMASDDARIGALRDKLWNGIKHIEETYINGDAIERVSGSLNVSFNYVEGESLMMALKDLAVSSGSACTSASLEPSYVLRALGLNDEMAHSSIRFSIGRFTTEEEIDHAIEVITQSIDKLREMSPLWEMFKDGIDLNQVQWAHH</sequence>
<protein>
    <recommendedName>
        <fullName evidence="1">Cysteine desulfurase IscS</fullName>
        <ecNumber evidence="1">2.8.1.7</ecNumber>
    </recommendedName>
</protein>
<evidence type="ECO:0000255" key="1">
    <source>
        <dbReference type="HAMAP-Rule" id="MF_00331"/>
    </source>
</evidence>